<organism>
    <name type="scientific">Odontobuthus doriae</name>
    <name type="common">Yellow Iranian scorpion</name>
    <dbReference type="NCBI Taxonomy" id="342590"/>
    <lineage>
        <taxon>Eukaryota</taxon>
        <taxon>Metazoa</taxon>
        <taxon>Ecdysozoa</taxon>
        <taxon>Arthropoda</taxon>
        <taxon>Chelicerata</taxon>
        <taxon>Arachnida</taxon>
        <taxon>Scorpiones</taxon>
        <taxon>Buthida</taxon>
        <taxon>Buthoidea</taxon>
        <taxon>Buthidae</taxon>
        <taxon>Odontobuthus</taxon>
    </lineage>
</organism>
<keyword id="KW-1015">Disulfide bond</keyword>
<keyword id="KW-0872">Ion channel impairing toxin</keyword>
<keyword id="KW-0528">Neurotoxin</keyword>
<keyword id="KW-0964">Secreted</keyword>
<keyword id="KW-0800">Toxin</keyword>
<keyword id="KW-0738">Voltage-gated sodium channel impairing toxin</keyword>
<name>SIXC_ODODO</name>
<feature type="chain" id="PRO_0000455071" description="Beta-insect excitatory toxin OdTx12">
    <location>
        <begin position="1" status="less than"/>
        <end position="64"/>
    </location>
</feature>
<feature type="domain" description="LCN-type CS-alpha/beta" evidence="3">
    <location>
        <begin position="1"/>
        <end position="59"/>
    </location>
</feature>
<feature type="disulfide bond" evidence="2">
    <location>
        <begin position="10"/>
        <end position="31"/>
    </location>
</feature>
<feature type="disulfide bond" evidence="2">
    <location>
        <begin position="16"/>
        <end position="36"/>
    </location>
</feature>
<feature type="disulfide bond" evidence="2">
    <location>
        <begin position="20"/>
        <end position="38"/>
    </location>
</feature>
<feature type="disulfide bond" evidence="2">
    <location>
        <begin position="32"/>
        <end position="58"/>
    </location>
</feature>
<feature type="non-terminal residue" evidence="11">
    <location>
        <position position="1"/>
    </location>
</feature>
<dbReference type="EMBL" id="KU295411">
    <property type="protein sequence ID" value="ALY87543.1"/>
    <property type="molecule type" value="mRNA"/>
</dbReference>
<dbReference type="SMR" id="A0A0U4AHC3"/>
<dbReference type="GO" id="GO:0005576">
    <property type="term" value="C:extracellular region"/>
    <property type="evidence" value="ECO:0007669"/>
    <property type="project" value="UniProtKB-SubCell"/>
</dbReference>
<dbReference type="GO" id="GO:0019871">
    <property type="term" value="F:sodium channel inhibitor activity"/>
    <property type="evidence" value="ECO:0007669"/>
    <property type="project" value="InterPro"/>
</dbReference>
<dbReference type="GO" id="GO:0090729">
    <property type="term" value="F:toxin activity"/>
    <property type="evidence" value="ECO:0007669"/>
    <property type="project" value="UniProtKB-KW"/>
</dbReference>
<dbReference type="CDD" id="cd23106">
    <property type="entry name" value="neurotoxins_LC_scorpion"/>
    <property type="match status" value="1"/>
</dbReference>
<dbReference type="Gene3D" id="3.30.30.10">
    <property type="entry name" value="Knottin, scorpion toxin-like"/>
    <property type="match status" value="1"/>
</dbReference>
<dbReference type="InterPro" id="IPR044062">
    <property type="entry name" value="LCN-type_CS_alpha_beta_dom"/>
</dbReference>
<dbReference type="InterPro" id="IPR036574">
    <property type="entry name" value="Scorpion_toxin-like_sf"/>
</dbReference>
<dbReference type="InterPro" id="IPR002061">
    <property type="entry name" value="Scorpion_toxinL/defensin"/>
</dbReference>
<dbReference type="Pfam" id="PF00537">
    <property type="entry name" value="Toxin_3"/>
    <property type="match status" value="1"/>
</dbReference>
<dbReference type="SUPFAM" id="SSF57095">
    <property type="entry name" value="Scorpion toxin-like"/>
    <property type="match status" value="1"/>
</dbReference>
<dbReference type="PROSITE" id="PS51863">
    <property type="entry name" value="LCN_CSAB"/>
    <property type="match status" value="1"/>
</dbReference>
<comment type="function">
    <text evidence="1 4">Excitatory insect beta-toxins induce a spastic paralysis (PubMed:32442468). They bind voltage-independently at site-4 of sodium channels (Nav) and shift the voltage of activation toward more negative potentials thereby affecting sodium channel activation and promoting spontaneous and repetitive firing (By similarity). In vivo, this recombinant protein is lethal to Locusta migratoria larvae after injection, but has no significant effect when orally administered. Is not toxic to mice after intracerebroventricular injection (PubMed:32442468).</text>
</comment>
<comment type="subcellular location">
    <subcellularLocation>
        <location evidence="9 10">Secreted</location>
    </subcellularLocation>
</comment>
<comment type="tissue specificity">
    <text evidence="9 10">Expressed by the venom gland.</text>
</comment>
<comment type="domain">
    <text evidence="8">Has the structural arrangement of an alpha-helix connected to antiparallel beta-sheets by disulfide bonds (CS-alpha/beta).</text>
</comment>
<comment type="toxic dose">
    <text evidence="4">LD(50) is 0.4 ug/100 mg of insect (after 48 hours) and 0.2 ug/100 mg of insect (after 72 hours) by injection into Locusta migratoria larvae.</text>
</comment>
<comment type="biotechnology">
    <text evidence="5">Could be considered as a biological insecticide candidate, when fused to Galanthus nivalis agglutinin (GNA), a protein with the potential to cross the insect gut. This chimeric OdTx12/GNA variant shows a gain in toxicity against insects when administered orally, while maintaining similar effects as the wild-type toxin when injected (toxic to insects and non-toxic to mammals).</text>
</comment>
<comment type="similarity">
    <text evidence="8">Belongs to the long (4 C-C) scorpion toxin superfamily. Sodium channel inhibitor family. Beta subfamily.</text>
</comment>
<evidence type="ECO:0000250" key="1">
    <source>
        <dbReference type="UniProtKB" id="O61668"/>
    </source>
</evidence>
<evidence type="ECO:0000250" key="2">
    <source>
        <dbReference type="UniProtKB" id="P56637"/>
    </source>
</evidence>
<evidence type="ECO:0000255" key="3">
    <source>
        <dbReference type="PROSITE-ProRule" id="PRU01210"/>
    </source>
</evidence>
<evidence type="ECO:0000269" key="4">
    <source>
    </source>
</evidence>
<evidence type="ECO:0000269" key="5">
    <source>
    </source>
</evidence>
<evidence type="ECO:0000303" key="6">
    <source>
    </source>
</evidence>
<evidence type="ECO:0000303" key="7">
    <source>
    </source>
</evidence>
<evidence type="ECO:0000305" key="8"/>
<evidence type="ECO:0000305" key="9">
    <source>
    </source>
</evidence>
<evidence type="ECO:0000305" key="10">
    <source>
    </source>
</evidence>
<evidence type="ECO:0000312" key="11">
    <source>
        <dbReference type="EMBL" id="ALY87543.1"/>
    </source>
</evidence>
<protein>
    <recommendedName>
        <fullName evidence="7">Beta-insect excitatory toxin OdTx12</fullName>
    </recommendedName>
    <alternativeName>
        <fullName evidence="6">Sodium channel toxin NaTx12</fullName>
    </alternativeName>
</protein>
<reference evidence="11" key="1">
    <citation type="journal article" date="2016" name="Toxicon">
        <title>First venom gland transcriptomic analysis of Iranian yellow scorpion 'Odonthubuthus doriae' with some new findings.</title>
        <authorList>
            <person name="Soorki M.N."/>
            <person name="Galehdari H."/>
            <person name="Baradaran M."/>
            <person name="Jalali A."/>
        </authorList>
    </citation>
    <scope>NUCLEOTIDE SEQUENCE [LARGE SCALE MRNA]</scope>
    <source>
        <tissue>Venom gland</tissue>
    </source>
</reference>
<reference key="2">
    <citation type="journal article" date="2018" name="Toxicon">
        <authorList>
            <person name="Soorki M.N."/>
            <person name="Galehdari H."/>
            <person name="Baradaran M."/>
            <person name="Jalali A."/>
        </authorList>
    </citation>
    <scope>ERRATUM OF PUBMED:27426055</scope>
</reference>
<reference key="3">
    <citation type="journal article" date="2020" name="Toxicon">
        <title>Cloning and expression of OdTx12, a beta excitatory toxin from Odontobuthus doriae, in Escherichia coli and evaluation of its bioactivity in Locusta migratoria.</title>
        <authorList>
            <person name="Khoshdel Nezamiha F."/>
            <person name="Imani S."/>
            <person name="Shahbazzadeh D."/>
            <person name="Tirgari S."/>
            <person name="Arabi Mianroodi R."/>
        </authorList>
    </citation>
    <scope>FUNCTION</scope>
    <scope>RECOMBINANT EXPRESSION</scope>
    <scope>BIOASSAY</scope>
    <scope>TOXIC DOSE</scope>
    <scope>3D-STRUCTURE MODELING</scope>
</reference>
<reference key="4">
    <citation type="journal article" date="2021" name="Toxicon">
        <title>OdTx12/GNA, a chimeric variant of a beta excitatory toxin from Odontobuthus doriae, reveals oral toxicity towards Locusta migratoria and Tenebrio molitor.</title>
        <authorList>
            <person name="Khoshdel Nezamiha F."/>
            <person name="Imani S."/>
            <person name="Arabi Mianroodi R."/>
            <person name="Tirgari S."/>
            <person name="Shahbazzadeh D."/>
        </authorList>
    </citation>
    <scope>BIOTECHNOLOGY</scope>
    <scope>RECOMBINANT EXPRESSION AS A CHIMERIC VARIANT</scope>
</reference>
<proteinExistence type="evidence at protein level"/>
<accession>A0A0U4AHC3</accession>
<sequence>QSTGGKAPECLLSNYCNNECTKVHYADKGYCCLLSCYCFGLSDDKKVLEISDSRKKYCDYTIIN</sequence>